<sequence>MSGPNGDLGMPVDAGTEGENDSFGEAEYAAINSMLDQINSCLDHLEEKNDHLHARLQELLESNRQTRLEFQQQLGEAPGDASP</sequence>
<gene>
    <name evidence="6" type="primary">Bbln</name>
</gene>
<dbReference type="EMBL" id="AK003598">
    <property type="status" value="NOT_ANNOTATED_CDS"/>
    <property type="molecule type" value="mRNA"/>
</dbReference>
<dbReference type="EMBL" id="BC024615">
    <property type="protein sequence ID" value="AAH24615.1"/>
    <property type="molecule type" value="mRNA"/>
</dbReference>
<dbReference type="EMBL" id="BC049639">
    <property type="protein sequence ID" value="AAH49639.1"/>
    <property type="molecule type" value="mRNA"/>
</dbReference>
<dbReference type="CCDS" id="CCDS38103.1"/>
<dbReference type="RefSeq" id="NP_932118.1">
    <property type="nucleotide sequence ID" value="NM_198001.3"/>
</dbReference>
<dbReference type="SMR" id="P58686"/>
<dbReference type="BioGRID" id="216222">
    <property type="interactions" value="2"/>
</dbReference>
<dbReference type="FunCoup" id="P58686">
    <property type="interactions" value="20"/>
</dbReference>
<dbReference type="STRING" id="10090.ENSMUSP00000038970"/>
<dbReference type="iPTMnet" id="P58686"/>
<dbReference type="PhosphoSitePlus" id="P58686"/>
<dbReference type="jPOST" id="P58686"/>
<dbReference type="PaxDb" id="10090-ENSMUSP00000038970"/>
<dbReference type="PeptideAtlas" id="P58686"/>
<dbReference type="Pumba" id="P58686"/>
<dbReference type="Antibodypedia" id="17364">
    <property type="antibodies" value="79 antibodies from 16 providers"/>
</dbReference>
<dbReference type="DNASU" id="73737"/>
<dbReference type="Ensembl" id="ENSMUST00000048792.5">
    <property type="protein sequence ID" value="ENSMUSP00000038970.5"/>
    <property type="gene ID" value="ENSMUSG00000039195.5"/>
</dbReference>
<dbReference type="GeneID" id="73737"/>
<dbReference type="KEGG" id="mmu:73737"/>
<dbReference type="UCSC" id="uc008jfk.2">
    <property type="organism name" value="mouse"/>
</dbReference>
<dbReference type="AGR" id="MGI:1920987"/>
<dbReference type="CTD" id="79095"/>
<dbReference type="MGI" id="MGI:1920987">
    <property type="gene designation" value="Bbln"/>
</dbReference>
<dbReference type="VEuPathDB" id="HostDB:ENSMUSG00000039195"/>
<dbReference type="eggNOG" id="ENOG502SAFB">
    <property type="taxonomic scope" value="Eukaryota"/>
</dbReference>
<dbReference type="GeneTree" id="ENSGT00390000001761"/>
<dbReference type="HOGENOM" id="CLU_167244_0_0_1"/>
<dbReference type="InParanoid" id="P58686"/>
<dbReference type="OMA" id="INLMLDQ"/>
<dbReference type="OrthoDB" id="10050612at2759"/>
<dbReference type="PhylomeDB" id="P58686"/>
<dbReference type="TreeFam" id="TF324640"/>
<dbReference type="BioGRID-ORCS" id="73737">
    <property type="hits" value="1 hit in 78 CRISPR screens"/>
</dbReference>
<dbReference type="PRO" id="PR:P58686"/>
<dbReference type="Proteomes" id="UP000000589">
    <property type="component" value="Chromosome 2"/>
</dbReference>
<dbReference type="RNAct" id="P58686">
    <property type="molecule type" value="protein"/>
</dbReference>
<dbReference type="Bgee" id="ENSMUSG00000039195">
    <property type="expression patterns" value="Expressed in facial nucleus and 260 other cell types or tissues"/>
</dbReference>
<dbReference type="ExpressionAtlas" id="P58686">
    <property type="expression patterns" value="baseline and differential"/>
</dbReference>
<dbReference type="GO" id="GO:0070161">
    <property type="term" value="C:anchoring junction"/>
    <property type="evidence" value="ECO:0007669"/>
    <property type="project" value="UniProtKB-SubCell"/>
</dbReference>
<dbReference type="GO" id="GO:0030054">
    <property type="term" value="C:cell junction"/>
    <property type="evidence" value="ECO:0000315"/>
    <property type="project" value="UniProtKB"/>
</dbReference>
<dbReference type="GO" id="GO:0005737">
    <property type="term" value="C:cytoplasm"/>
    <property type="evidence" value="ECO:0007669"/>
    <property type="project" value="UniProtKB-KW"/>
</dbReference>
<dbReference type="GO" id="GO:0005882">
    <property type="term" value="C:intermediate filament"/>
    <property type="evidence" value="ECO:0007669"/>
    <property type="project" value="Ensembl"/>
</dbReference>
<dbReference type="GO" id="GO:0005828">
    <property type="term" value="C:kinetochore microtubule"/>
    <property type="evidence" value="ECO:0007669"/>
    <property type="project" value="Ensembl"/>
</dbReference>
<dbReference type="GO" id="GO:0120219">
    <property type="term" value="C:subapical part of cell"/>
    <property type="evidence" value="ECO:0000315"/>
    <property type="project" value="UniProtKB"/>
</dbReference>
<dbReference type="GO" id="GO:0060090">
    <property type="term" value="F:molecular adaptor activity"/>
    <property type="evidence" value="ECO:0000250"/>
    <property type="project" value="UniProtKB"/>
</dbReference>
<dbReference type="GO" id="GO:0006915">
    <property type="term" value="P:apoptotic process"/>
    <property type="evidence" value="ECO:0000315"/>
    <property type="project" value="MGI"/>
</dbReference>
<dbReference type="GO" id="GO:0097190">
    <property type="term" value="P:apoptotic signaling pathway"/>
    <property type="evidence" value="ECO:0000315"/>
    <property type="project" value="MGI"/>
</dbReference>
<dbReference type="GO" id="GO:0060348">
    <property type="term" value="P:bone development"/>
    <property type="evidence" value="ECO:0000315"/>
    <property type="project" value="MGI"/>
</dbReference>
<dbReference type="GO" id="GO:0045453">
    <property type="term" value="P:bone resorption"/>
    <property type="evidence" value="ECO:0000315"/>
    <property type="project" value="MGI"/>
</dbReference>
<dbReference type="GO" id="GO:0010467">
    <property type="term" value="P:gene expression"/>
    <property type="evidence" value="ECO:0000315"/>
    <property type="project" value="MGI"/>
</dbReference>
<dbReference type="GO" id="GO:0045110">
    <property type="term" value="P:intermediate filament bundle assembly"/>
    <property type="evidence" value="ECO:0000250"/>
    <property type="project" value="UniProtKB"/>
</dbReference>
<dbReference type="GO" id="GO:0072674">
    <property type="term" value="P:multinuclear osteoclast differentiation"/>
    <property type="evidence" value="ECO:0000315"/>
    <property type="project" value="MGI"/>
</dbReference>
<dbReference type="GO" id="GO:0030316">
    <property type="term" value="P:osteoclast differentiation"/>
    <property type="evidence" value="ECO:0000315"/>
    <property type="project" value="MGI"/>
</dbReference>
<dbReference type="InterPro" id="IPR005374">
    <property type="entry name" value="BBLN_eukaryota"/>
</dbReference>
<dbReference type="PANTHER" id="PTHR34344:SF1">
    <property type="entry name" value="BUBLIN COILED-COIL PROTEIN"/>
    <property type="match status" value="1"/>
</dbReference>
<dbReference type="PANTHER" id="PTHR34344">
    <property type="entry name" value="UPF0184 PROTEIN C9ORF16"/>
    <property type="match status" value="1"/>
</dbReference>
<dbReference type="Pfam" id="PF03670">
    <property type="entry name" value="UPF0184"/>
    <property type="match status" value="1"/>
</dbReference>
<evidence type="ECO:0000250" key="1">
    <source>
        <dbReference type="UniProtKB" id="Q9BUW7"/>
    </source>
</evidence>
<evidence type="ECO:0000255" key="2"/>
<evidence type="ECO:0000256" key="3">
    <source>
        <dbReference type="SAM" id="MobiDB-lite"/>
    </source>
</evidence>
<evidence type="ECO:0000269" key="4">
    <source>
    </source>
</evidence>
<evidence type="ECO:0000305" key="5"/>
<evidence type="ECO:0000312" key="6">
    <source>
        <dbReference type="MGI" id="MGI:1920987"/>
    </source>
</evidence>
<protein>
    <recommendedName>
        <fullName evidence="1">Bublin coiled-coil protein</fullName>
    </recommendedName>
    <alternativeName>
        <fullName>UPF0184 protein C9orf16 homolog</fullName>
    </alternativeName>
</protein>
<reference key="1">
    <citation type="journal article" date="2005" name="Science">
        <title>The transcriptional landscape of the mammalian genome.</title>
        <authorList>
            <person name="Carninci P."/>
            <person name="Kasukawa T."/>
            <person name="Katayama S."/>
            <person name="Gough J."/>
            <person name="Frith M.C."/>
            <person name="Maeda N."/>
            <person name="Oyama R."/>
            <person name="Ravasi T."/>
            <person name="Lenhard B."/>
            <person name="Wells C."/>
            <person name="Kodzius R."/>
            <person name="Shimokawa K."/>
            <person name="Bajic V.B."/>
            <person name="Brenner S.E."/>
            <person name="Batalov S."/>
            <person name="Forrest A.R."/>
            <person name="Zavolan M."/>
            <person name="Davis M.J."/>
            <person name="Wilming L.G."/>
            <person name="Aidinis V."/>
            <person name="Allen J.E."/>
            <person name="Ambesi-Impiombato A."/>
            <person name="Apweiler R."/>
            <person name="Aturaliya R.N."/>
            <person name="Bailey T.L."/>
            <person name="Bansal M."/>
            <person name="Baxter L."/>
            <person name="Beisel K.W."/>
            <person name="Bersano T."/>
            <person name="Bono H."/>
            <person name="Chalk A.M."/>
            <person name="Chiu K.P."/>
            <person name="Choudhary V."/>
            <person name="Christoffels A."/>
            <person name="Clutterbuck D.R."/>
            <person name="Crowe M.L."/>
            <person name="Dalla E."/>
            <person name="Dalrymple B.P."/>
            <person name="de Bono B."/>
            <person name="Della Gatta G."/>
            <person name="di Bernardo D."/>
            <person name="Down T."/>
            <person name="Engstrom P."/>
            <person name="Fagiolini M."/>
            <person name="Faulkner G."/>
            <person name="Fletcher C.F."/>
            <person name="Fukushima T."/>
            <person name="Furuno M."/>
            <person name="Futaki S."/>
            <person name="Gariboldi M."/>
            <person name="Georgii-Hemming P."/>
            <person name="Gingeras T.R."/>
            <person name="Gojobori T."/>
            <person name="Green R.E."/>
            <person name="Gustincich S."/>
            <person name="Harbers M."/>
            <person name="Hayashi Y."/>
            <person name="Hensch T.K."/>
            <person name="Hirokawa N."/>
            <person name="Hill D."/>
            <person name="Huminiecki L."/>
            <person name="Iacono M."/>
            <person name="Ikeo K."/>
            <person name="Iwama A."/>
            <person name="Ishikawa T."/>
            <person name="Jakt M."/>
            <person name="Kanapin A."/>
            <person name="Katoh M."/>
            <person name="Kawasawa Y."/>
            <person name="Kelso J."/>
            <person name="Kitamura H."/>
            <person name="Kitano H."/>
            <person name="Kollias G."/>
            <person name="Krishnan S.P."/>
            <person name="Kruger A."/>
            <person name="Kummerfeld S.K."/>
            <person name="Kurochkin I.V."/>
            <person name="Lareau L.F."/>
            <person name="Lazarevic D."/>
            <person name="Lipovich L."/>
            <person name="Liu J."/>
            <person name="Liuni S."/>
            <person name="McWilliam S."/>
            <person name="Madan Babu M."/>
            <person name="Madera M."/>
            <person name="Marchionni L."/>
            <person name="Matsuda H."/>
            <person name="Matsuzawa S."/>
            <person name="Miki H."/>
            <person name="Mignone F."/>
            <person name="Miyake S."/>
            <person name="Morris K."/>
            <person name="Mottagui-Tabar S."/>
            <person name="Mulder N."/>
            <person name="Nakano N."/>
            <person name="Nakauchi H."/>
            <person name="Ng P."/>
            <person name="Nilsson R."/>
            <person name="Nishiguchi S."/>
            <person name="Nishikawa S."/>
            <person name="Nori F."/>
            <person name="Ohara O."/>
            <person name="Okazaki Y."/>
            <person name="Orlando V."/>
            <person name="Pang K.C."/>
            <person name="Pavan W.J."/>
            <person name="Pavesi G."/>
            <person name="Pesole G."/>
            <person name="Petrovsky N."/>
            <person name="Piazza S."/>
            <person name="Reed J."/>
            <person name="Reid J.F."/>
            <person name="Ring B.Z."/>
            <person name="Ringwald M."/>
            <person name="Rost B."/>
            <person name="Ruan Y."/>
            <person name="Salzberg S.L."/>
            <person name="Sandelin A."/>
            <person name="Schneider C."/>
            <person name="Schoenbach C."/>
            <person name="Sekiguchi K."/>
            <person name="Semple C.A."/>
            <person name="Seno S."/>
            <person name="Sessa L."/>
            <person name="Sheng Y."/>
            <person name="Shibata Y."/>
            <person name="Shimada H."/>
            <person name="Shimada K."/>
            <person name="Silva D."/>
            <person name="Sinclair B."/>
            <person name="Sperling S."/>
            <person name="Stupka E."/>
            <person name="Sugiura K."/>
            <person name="Sultana R."/>
            <person name="Takenaka Y."/>
            <person name="Taki K."/>
            <person name="Tammoja K."/>
            <person name="Tan S.L."/>
            <person name="Tang S."/>
            <person name="Taylor M.S."/>
            <person name="Tegner J."/>
            <person name="Teichmann S.A."/>
            <person name="Ueda H.R."/>
            <person name="van Nimwegen E."/>
            <person name="Verardo R."/>
            <person name="Wei C.L."/>
            <person name="Yagi K."/>
            <person name="Yamanishi H."/>
            <person name="Zabarovsky E."/>
            <person name="Zhu S."/>
            <person name="Zimmer A."/>
            <person name="Hide W."/>
            <person name="Bult C."/>
            <person name="Grimmond S.M."/>
            <person name="Teasdale R.D."/>
            <person name="Liu E.T."/>
            <person name="Brusic V."/>
            <person name="Quackenbush J."/>
            <person name="Wahlestedt C."/>
            <person name="Mattick J.S."/>
            <person name="Hume D.A."/>
            <person name="Kai C."/>
            <person name="Sasaki D."/>
            <person name="Tomaru Y."/>
            <person name="Fukuda S."/>
            <person name="Kanamori-Katayama M."/>
            <person name="Suzuki M."/>
            <person name="Aoki J."/>
            <person name="Arakawa T."/>
            <person name="Iida J."/>
            <person name="Imamura K."/>
            <person name="Itoh M."/>
            <person name="Kato T."/>
            <person name="Kawaji H."/>
            <person name="Kawagashira N."/>
            <person name="Kawashima T."/>
            <person name="Kojima M."/>
            <person name="Kondo S."/>
            <person name="Konno H."/>
            <person name="Nakano K."/>
            <person name="Ninomiya N."/>
            <person name="Nishio T."/>
            <person name="Okada M."/>
            <person name="Plessy C."/>
            <person name="Shibata K."/>
            <person name="Shiraki T."/>
            <person name="Suzuki S."/>
            <person name="Tagami M."/>
            <person name="Waki K."/>
            <person name="Watahiki A."/>
            <person name="Okamura-Oho Y."/>
            <person name="Suzuki H."/>
            <person name="Kawai J."/>
            <person name="Hayashizaki Y."/>
        </authorList>
    </citation>
    <scope>NUCLEOTIDE SEQUENCE [LARGE SCALE MRNA]</scope>
    <source>
        <strain>C57BL/6J</strain>
        <tissue>Embryo</tissue>
    </source>
</reference>
<reference key="2">
    <citation type="journal article" date="2004" name="Genome Res.">
        <title>The status, quality, and expansion of the NIH full-length cDNA project: the Mammalian Gene Collection (MGC).</title>
        <authorList>
            <consortium name="The MGC Project Team"/>
        </authorList>
    </citation>
    <scope>NUCLEOTIDE SEQUENCE [LARGE SCALE MRNA]</scope>
    <source>
        <strain>C57BL/6J</strain>
        <tissue>Brain</tissue>
        <tissue>Mammary gland</tissue>
    </source>
</reference>
<reference key="3">
    <citation type="journal article" date="2021" name="Curr. Biol.">
        <title>BBLN-1 is essential for intermediate filament organization and apical membrane morphology.</title>
        <authorList>
            <person name="Remmelzwaal S."/>
            <person name="Geisler F."/>
            <person name="Stucchi R."/>
            <person name="van der Horst S."/>
            <person name="Pasolli M."/>
            <person name="Kroll J.R."/>
            <person name="Jarosinska O.D."/>
            <person name="Akhmanova A."/>
            <person name="Richardson C.A."/>
            <person name="Altelaar M."/>
            <person name="Leube R.E."/>
            <person name="Ramalho J.J."/>
            <person name="Boxem M."/>
        </authorList>
    </citation>
    <scope>SUBCELLULAR LOCATION</scope>
</reference>
<proteinExistence type="inferred from homology"/>
<feature type="chain" id="PRO_0000195162" description="Bublin coiled-coil protein">
    <location>
        <begin position="1"/>
        <end position="83"/>
    </location>
</feature>
<feature type="region of interest" description="Disordered" evidence="3">
    <location>
        <begin position="1"/>
        <end position="25"/>
    </location>
</feature>
<feature type="coiled-coil region" evidence="2">
    <location>
        <begin position="25"/>
        <end position="74"/>
    </location>
</feature>
<feature type="modified residue" description="Phosphoserine" evidence="1">
    <location>
        <position position="82"/>
    </location>
</feature>
<organism>
    <name type="scientific">Mus musculus</name>
    <name type="common">Mouse</name>
    <dbReference type="NCBI Taxonomy" id="10090"/>
    <lineage>
        <taxon>Eukaryota</taxon>
        <taxon>Metazoa</taxon>
        <taxon>Chordata</taxon>
        <taxon>Craniata</taxon>
        <taxon>Vertebrata</taxon>
        <taxon>Euteleostomi</taxon>
        <taxon>Mammalia</taxon>
        <taxon>Eutheria</taxon>
        <taxon>Euarchontoglires</taxon>
        <taxon>Glires</taxon>
        <taxon>Rodentia</taxon>
        <taxon>Myomorpha</taxon>
        <taxon>Muroidea</taxon>
        <taxon>Muridae</taxon>
        <taxon>Murinae</taxon>
        <taxon>Mus</taxon>
        <taxon>Mus</taxon>
    </lineage>
</organism>
<accession>P58686</accession>
<comment type="function">
    <text evidence="1">Essential for intermediate filament organization in intestinal cells, interacts with intermediate filament and regulates intestinal lumen morphology.</text>
</comment>
<comment type="subcellular location">
    <subcellularLocation>
        <location evidence="4">Cell junction</location>
    </subcellularLocation>
    <subcellularLocation>
        <location evidence="4">Cytoplasm</location>
        <location evidence="4">Cytoskeleton</location>
    </subcellularLocation>
    <text evidence="1 4">In the intestine, localizes subapically and at cell junctions. Interacts with intermediate filament (IF) proteins and localizes to the IF network in an IF-dependent manner (By similarity) (PubMed:33857431). In dividing cells, localizes to interpolar and kinetochore microtubules (By similarity).</text>
</comment>
<comment type="similarity">
    <text evidence="5">Belongs to the UPF0184 (EST00098) family.</text>
</comment>
<name>BBLN_MOUSE</name>
<keyword id="KW-0965">Cell junction</keyword>
<keyword id="KW-0175">Coiled coil</keyword>
<keyword id="KW-0963">Cytoplasm</keyword>
<keyword id="KW-0206">Cytoskeleton</keyword>
<keyword id="KW-0597">Phosphoprotein</keyword>
<keyword id="KW-1185">Reference proteome</keyword>